<protein>
    <recommendedName>
        <fullName>Protein YabQ</fullName>
    </recommendedName>
</protein>
<keyword id="KW-1185">Reference proteome</keyword>
<name>YABQ_ECOLI</name>
<dbReference type="EMBL" id="U00096">
    <property type="protein sequence ID" value="AYC08163.1"/>
    <property type="molecule type" value="Genomic_DNA"/>
</dbReference>
<dbReference type="EMBL" id="AP009048">
    <property type="protein sequence ID" value="BAB96625.1"/>
    <property type="molecule type" value="Genomic_DNA"/>
</dbReference>
<dbReference type="PIR" id="A64727">
    <property type="entry name" value="A64727"/>
</dbReference>
<dbReference type="FunCoup" id="P39221">
    <property type="interactions" value="2"/>
</dbReference>
<dbReference type="EnsemblBacteria" id="AYC08163">
    <property type="protein sequence ID" value="AYC08163"/>
    <property type="gene ID" value="b0057"/>
</dbReference>
<dbReference type="KEGG" id="ecj:JW0056"/>
<dbReference type="EchoBASE" id="EB2495"/>
<dbReference type="HOGENOM" id="CLU_3216097_0_0_6"/>
<dbReference type="InParanoid" id="P39221"/>
<dbReference type="BioCyc" id="EcoCyc:EG12611-MONOMER"/>
<dbReference type="PRO" id="PR:P39221"/>
<dbReference type="Proteomes" id="UP000000625">
    <property type="component" value="Chromosome"/>
</dbReference>
<organism>
    <name type="scientific">Escherichia coli (strain K12)</name>
    <dbReference type="NCBI Taxonomy" id="83333"/>
    <lineage>
        <taxon>Bacteria</taxon>
        <taxon>Pseudomonadati</taxon>
        <taxon>Pseudomonadota</taxon>
        <taxon>Gammaproteobacteria</taxon>
        <taxon>Enterobacterales</taxon>
        <taxon>Enterobacteriaceae</taxon>
        <taxon>Escherichia</taxon>
    </lineage>
</organism>
<feature type="chain" id="PRO_0000168524" description="Protein YabQ">
    <location>
        <begin position="1"/>
        <end position="52"/>
    </location>
</feature>
<proteinExistence type="predicted"/>
<evidence type="ECO:0000269" key="1">
    <source>
    </source>
</evidence>
<sequence>MNGATSLYDEVIIINKIPPKKIDTKGVATEEVATKKVLLNKLLTTQLLNEPE</sequence>
<gene>
    <name type="primary">yabQ</name>
    <name type="ordered locus">b0057</name>
    <name type="ordered locus">b4659</name>
    <name type="ordered locus">JW0056</name>
</gene>
<accession>P39221</accession>
<accession>A0A385XJ52</accession>
<reference key="1">
    <citation type="journal article" date="1992" name="Nucleic Acids Res.">
        <title>Systematic sequencing of the Escherichia coli genome: analysis of the 0-2.4 min region.</title>
        <authorList>
            <person name="Yura T."/>
            <person name="Mori H."/>
            <person name="Nagai H."/>
            <person name="Nagata T."/>
            <person name="Ishihama A."/>
            <person name="Fujita N."/>
            <person name="Isono K."/>
            <person name="Mizobuchi K."/>
            <person name="Nakata A."/>
        </authorList>
    </citation>
    <scope>NUCLEOTIDE SEQUENCE [LARGE SCALE GENOMIC DNA]</scope>
    <source>
        <strain>K12</strain>
    </source>
</reference>
<reference key="2">
    <citation type="journal article" date="1997" name="Science">
        <title>The complete genome sequence of Escherichia coli K-12.</title>
        <authorList>
            <person name="Blattner F.R."/>
            <person name="Plunkett G. III"/>
            <person name="Bloch C.A."/>
            <person name="Perna N.T."/>
            <person name="Burland V."/>
            <person name="Riley M."/>
            <person name="Collado-Vides J."/>
            <person name="Glasner J.D."/>
            <person name="Rode C.K."/>
            <person name="Mayhew G.F."/>
            <person name="Gregor J."/>
            <person name="Davis N.W."/>
            <person name="Kirkpatrick H.A."/>
            <person name="Goeden M.A."/>
            <person name="Rose D.J."/>
            <person name="Mau B."/>
            <person name="Shao Y."/>
        </authorList>
    </citation>
    <scope>NUCLEOTIDE SEQUENCE [LARGE SCALE GENOMIC DNA]</scope>
    <source>
        <strain>K12 / MG1655 / ATCC 47076</strain>
    </source>
</reference>
<reference key="3">
    <citation type="journal article" date="2006" name="Mol. Syst. Biol.">
        <title>Highly accurate genome sequences of Escherichia coli K-12 strains MG1655 and W3110.</title>
        <authorList>
            <person name="Hayashi K."/>
            <person name="Morooka N."/>
            <person name="Yamamoto Y."/>
            <person name="Fujita K."/>
            <person name="Isono K."/>
            <person name="Choi S."/>
            <person name="Ohtsubo E."/>
            <person name="Baba T."/>
            <person name="Wanner B.L."/>
            <person name="Mori H."/>
            <person name="Horiuchi T."/>
        </authorList>
    </citation>
    <scope>NUCLEOTIDE SEQUENCE [LARGE SCALE GENOMIC DNA]</scope>
    <source>
        <strain>K12 / W3110 / ATCC 27325 / DSM 5911</strain>
    </source>
</reference>
<reference key="4">
    <citation type="unpublished observations" date="1994-11">
        <authorList>
            <person name="Rudd K.E."/>
        </authorList>
    </citation>
    <scope>IDENTIFICATION</scope>
</reference>
<reference key="5">
    <citation type="journal article" date="2008" name="J. Bacteriol.">
        <title>Genetic interaction screens with ordered overexpression and deletion clone sets implicate the Escherichia coli GTPase YjeQ in late ribosome biogenesis.</title>
        <authorList>
            <person name="Campbell T.L."/>
            <person name="Brown E.D."/>
        </authorList>
    </citation>
    <scope>PARTIALLY SUPPRESSES AN RSGA MUTANT</scope>
    <source>
        <strain>K12</strain>
    </source>
</reference>
<comment type="function">
    <text evidence="1">Identified as a multicopy suppressor of the slow growth phenotype of an rsgA (yjeQ) deletion mutant.</text>
</comment>